<gene>
    <name evidence="1" type="primary">mdtH</name>
    <name type="ordered locus">KPK_3480</name>
</gene>
<comment type="subcellular location">
    <subcellularLocation>
        <location evidence="1">Cell inner membrane</location>
        <topology evidence="1">Multi-pass membrane protein</topology>
    </subcellularLocation>
</comment>
<comment type="similarity">
    <text evidence="1">Belongs to the major facilitator superfamily. DHA1 family. MdtH (TC 2.A.1.2.21) subfamily.</text>
</comment>
<dbReference type="EMBL" id="CP000964">
    <property type="protein sequence ID" value="ACI11034.1"/>
    <property type="molecule type" value="Genomic_DNA"/>
</dbReference>
<dbReference type="SMR" id="B5XXJ2"/>
<dbReference type="KEGG" id="kpe:KPK_3480"/>
<dbReference type="HOGENOM" id="CLU_001265_60_2_6"/>
<dbReference type="Proteomes" id="UP000001734">
    <property type="component" value="Chromosome"/>
</dbReference>
<dbReference type="GO" id="GO:0005886">
    <property type="term" value="C:plasma membrane"/>
    <property type="evidence" value="ECO:0007669"/>
    <property type="project" value="UniProtKB-SubCell"/>
</dbReference>
<dbReference type="GO" id="GO:0022857">
    <property type="term" value="F:transmembrane transporter activity"/>
    <property type="evidence" value="ECO:0007669"/>
    <property type="project" value="UniProtKB-UniRule"/>
</dbReference>
<dbReference type="CDD" id="cd17329">
    <property type="entry name" value="MFS_MdtH_MDR_like"/>
    <property type="match status" value="1"/>
</dbReference>
<dbReference type="Gene3D" id="1.20.1250.20">
    <property type="entry name" value="MFS general substrate transporter like domains"/>
    <property type="match status" value="1"/>
</dbReference>
<dbReference type="HAMAP" id="MF_01529">
    <property type="entry name" value="MFS_MdtH"/>
    <property type="match status" value="1"/>
</dbReference>
<dbReference type="InterPro" id="IPR011701">
    <property type="entry name" value="MFS"/>
</dbReference>
<dbReference type="InterPro" id="IPR020846">
    <property type="entry name" value="MFS_dom"/>
</dbReference>
<dbReference type="InterPro" id="IPR036259">
    <property type="entry name" value="MFS_trans_sf"/>
</dbReference>
<dbReference type="InterPro" id="IPR050171">
    <property type="entry name" value="MFS_Transporters"/>
</dbReference>
<dbReference type="InterPro" id="IPR022855">
    <property type="entry name" value="Multidrug-R_MdtH"/>
</dbReference>
<dbReference type="NCBIfam" id="NF008650">
    <property type="entry name" value="PRK11646.1"/>
    <property type="match status" value="1"/>
</dbReference>
<dbReference type="PANTHER" id="PTHR23517:SF2">
    <property type="entry name" value="MULTIDRUG RESISTANCE PROTEIN MDTH"/>
    <property type="match status" value="1"/>
</dbReference>
<dbReference type="PANTHER" id="PTHR23517">
    <property type="entry name" value="RESISTANCE PROTEIN MDTM, PUTATIVE-RELATED-RELATED"/>
    <property type="match status" value="1"/>
</dbReference>
<dbReference type="Pfam" id="PF07690">
    <property type="entry name" value="MFS_1"/>
    <property type="match status" value="1"/>
</dbReference>
<dbReference type="SUPFAM" id="SSF103473">
    <property type="entry name" value="MFS general substrate transporter"/>
    <property type="match status" value="1"/>
</dbReference>
<dbReference type="PROSITE" id="PS50850">
    <property type="entry name" value="MFS"/>
    <property type="match status" value="1"/>
</dbReference>
<accession>B5XXJ2</accession>
<keyword id="KW-0997">Cell inner membrane</keyword>
<keyword id="KW-1003">Cell membrane</keyword>
<keyword id="KW-0472">Membrane</keyword>
<keyword id="KW-0812">Transmembrane</keyword>
<keyword id="KW-1133">Transmembrane helix</keyword>
<keyword id="KW-0813">Transport</keyword>
<protein>
    <recommendedName>
        <fullName evidence="1">Multidrug resistance protein MdtH</fullName>
    </recommendedName>
</protein>
<reference key="1">
    <citation type="journal article" date="2008" name="PLoS Genet.">
        <title>Complete genome sequence of the N2-fixing broad host range endophyte Klebsiella pneumoniae 342 and virulence predictions verified in mice.</title>
        <authorList>
            <person name="Fouts D.E."/>
            <person name="Tyler H.L."/>
            <person name="DeBoy R.T."/>
            <person name="Daugherty S."/>
            <person name="Ren Q."/>
            <person name="Badger J.H."/>
            <person name="Durkin A.S."/>
            <person name="Huot H."/>
            <person name="Shrivastava S."/>
            <person name="Kothari S."/>
            <person name="Dodson R.J."/>
            <person name="Mohamoud Y."/>
            <person name="Khouri H."/>
            <person name="Roesch L.F.W."/>
            <person name="Krogfelt K.A."/>
            <person name="Struve C."/>
            <person name="Triplett E.W."/>
            <person name="Methe B.A."/>
        </authorList>
    </citation>
    <scope>NUCLEOTIDE SEQUENCE [LARGE SCALE GENOMIC DNA]</scope>
    <source>
        <strain>342</strain>
    </source>
</reference>
<feature type="chain" id="PRO_1000200802" description="Multidrug resistance protein MdtH">
    <location>
        <begin position="1"/>
        <end position="402"/>
    </location>
</feature>
<feature type="transmembrane region" description="Helical" evidence="1">
    <location>
        <begin position="13"/>
        <end position="33"/>
    </location>
</feature>
<feature type="transmembrane region" description="Helical" evidence="1">
    <location>
        <begin position="34"/>
        <end position="54"/>
    </location>
</feature>
<feature type="transmembrane region" description="Helical" evidence="1">
    <location>
        <begin position="99"/>
        <end position="116"/>
    </location>
</feature>
<feature type="transmembrane region" description="Helical" evidence="1">
    <location>
        <begin position="139"/>
        <end position="159"/>
    </location>
</feature>
<feature type="transmembrane region" description="Helical" evidence="1">
    <location>
        <begin position="165"/>
        <end position="185"/>
    </location>
</feature>
<feature type="transmembrane region" description="Helical" evidence="1">
    <location>
        <begin position="214"/>
        <end position="234"/>
    </location>
</feature>
<feature type="transmembrane region" description="Helical" evidence="1">
    <location>
        <begin position="243"/>
        <end position="263"/>
    </location>
</feature>
<feature type="transmembrane region" description="Helical" evidence="1">
    <location>
        <begin position="277"/>
        <end position="297"/>
    </location>
</feature>
<feature type="transmembrane region" description="Helical" evidence="1">
    <location>
        <begin position="300"/>
        <end position="320"/>
    </location>
</feature>
<feature type="transmembrane region" description="Helical" evidence="1">
    <location>
        <begin position="340"/>
        <end position="360"/>
    </location>
</feature>
<feature type="transmembrane region" description="Helical" evidence="1">
    <location>
        <begin position="368"/>
        <end position="388"/>
    </location>
</feature>
<evidence type="ECO:0000255" key="1">
    <source>
        <dbReference type="HAMAP-Rule" id="MF_01529"/>
    </source>
</evidence>
<proteinExistence type="inferred from homology"/>
<sequence length="402" mass="43903">MSRVSQARSLGKYFLLVDNMLVVLGFFVVFPLISIRFVDQMGWAALMVGIALGLRQLVQQGLGIFGGAIADRFGAKPMIVTGMLMRAGGFAAMAVAHEPWVLWLSCILSGLGGTLFDPPRAALVVKLVRPHQRGRFFSLLMMQDSAGAVIGALLGSWLLQYDFRLVCSAGAALFIACAAFNAWYLPAWKLSTVKTPVREGLGRVLRDKRFVTYVLTLTGYYMLAVQVMLMLPIMVNDIAGSPAAVKWMYAIEATISLTLLYPIARWSEKRYRLEHRLMAGLLVMTLAMLPIGMTSSLQQLFTLICLFYIGSIIAEPARETLGASLADARARGSYMGFSRLGLAFGGALGYAGGGWLFDAGKAVGQPELPWLMLGAIGFITFLALWWQFSPKRSASGMLEPRT</sequence>
<name>MDTH_KLEP3</name>
<organism>
    <name type="scientific">Klebsiella pneumoniae (strain 342)</name>
    <dbReference type="NCBI Taxonomy" id="507522"/>
    <lineage>
        <taxon>Bacteria</taxon>
        <taxon>Pseudomonadati</taxon>
        <taxon>Pseudomonadota</taxon>
        <taxon>Gammaproteobacteria</taxon>
        <taxon>Enterobacterales</taxon>
        <taxon>Enterobacteriaceae</taxon>
        <taxon>Klebsiella/Raoultella group</taxon>
        <taxon>Klebsiella</taxon>
        <taxon>Klebsiella pneumoniae complex</taxon>
    </lineage>
</organism>